<comment type="function">
    <text evidence="1">ATPase subunit of a proteasome-like degradation complex; this subunit has chaperone activity. The binding of ATP and its subsequent hydrolysis by HslU are essential for unfolding of protein substrates subsequently hydrolyzed by HslV. HslU recognizes the N-terminal part of its protein substrates and unfolds these before they are guided to HslV for hydrolysis.</text>
</comment>
<comment type="subunit">
    <text evidence="1">A double ring-shaped homohexamer of HslV is capped on each side by a ring-shaped HslU homohexamer. The assembly of the HslU/HslV complex is dependent on binding of ATP.</text>
</comment>
<comment type="subcellular location">
    <subcellularLocation>
        <location evidence="1">Cytoplasm</location>
    </subcellularLocation>
</comment>
<comment type="similarity">
    <text evidence="1">Belongs to the ClpX chaperone family. HslU subfamily.</text>
</comment>
<proteinExistence type="inferred from homology"/>
<sequence>MTDFSPREIVSELDRFIVGQSDAKRAVSIALRNRWRRLQLEGALREEVLPKNILMIGPTGVGKTEIARRLAKLAGAPFIKVEATKFTEVGYVGRDVEQIIRDLVEVAIAQVREKKRKDVQARAQLAAEERVLDALVGASASPATRDSFRKKLRAGELNDKEIEVETQASSGSPMFEIPGMPGAQIGAVSLGDIFGKMGGRTKTRRLTVADSHEILVNEEADKLLDSDQLTIEAINAVENNGIVFLDEIDKICVRDGRSGGEVSREGVQRDLLPLIEGTTVSTKHGAVKTDHILFIASGAFHIAKPSDLLPELQGRLPIRVELNALSRDDMRRILTEPEVSLIKQYVALLGTEGVTLEFGDDAIDALADVAVQVNSTVENIGARRLQTVMERVLDEISFSAPDRSGETIRIDAEFVQKHVGDLAKNADLSRFIL</sequence>
<reference key="1">
    <citation type="submission" date="2006-09" db="EMBL/GenBank/DDBJ databases">
        <title>Complete sequence of Rhodopseudomonas palustris BisA53.</title>
        <authorList>
            <consortium name="US DOE Joint Genome Institute"/>
            <person name="Copeland A."/>
            <person name="Lucas S."/>
            <person name="Lapidus A."/>
            <person name="Barry K."/>
            <person name="Detter J.C."/>
            <person name="Glavina del Rio T."/>
            <person name="Hammon N."/>
            <person name="Israni S."/>
            <person name="Dalin E."/>
            <person name="Tice H."/>
            <person name="Pitluck S."/>
            <person name="Chain P."/>
            <person name="Malfatti S."/>
            <person name="Shin M."/>
            <person name="Vergez L."/>
            <person name="Schmutz J."/>
            <person name="Larimer F."/>
            <person name="Land M."/>
            <person name="Hauser L."/>
            <person name="Pelletier D.A."/>
            <person name="Kyrpides N."/>
            <person name="Kim E."/>
            <person name="Harwood C.S."/>
            <person name="Oda Y."/>
            <person name="Richardson P."/>
        </authorList>
    </citation>
    <scope>NUCLEOTIDE SEQUENCE [LARGE SCALE GENOMIC DNA]</scope>
    <source>
        <strain>BisA53</strain>
    </source>
</reference>
<accession>Q07UQ3</accession>
<feature type="chain" id="PRO_1000012787" description="ATP-dependent protease ATPase subunit HslU">
    <location>
        <begin position="1"/>
        <end position="433"/>
    </location>
</feature>
<feature type="binding site" evidence="1">
    <location>
        <position position="18"/>
    </location>
    <ligand>
        <name>ATP</name>
        <dbReference type="ChEBI" id="CHEBI:30616"/>
    </ligand>
</feature>
<feature type="binding site" evidence="1">
    <location>
        <begin position="60"/>
        <end position="65"/>
    </location>
    <ligand>
        <name>ATP</name>
        <dbReference type="ChEBI" id="CHEBI:30616"/>
    </ligand>
</feature>
<feature type="binding site" evidence="1">
    <location>
        <position position="246"/>
    </location>
    <ligand>
        <name>ATP</name>
        <dbReference type="ChEBI" id="CHEBI:30616"/>
    </ligand>
</feature>
<feature type="binding site" evidence="1">
    <location>
        <position position="311"/>
    </location>
    <ligand>
        <name>ATP</name>
        <dbReference type="ChEBI" id="CHEBI:30616"/>
    </ligand>
</feature>
<feature type="binding site" evidence="1">
    <location>
        <position position="383"/>
    </location>
    <ligand>
        <name>ATP</name>
        <dbReference type="ChEBI" id="CHEBI:30616"/>
    </ligand>
</feature>
<gene>
    <name evidence="1" type="primary">hslU</name>
    <name type="ordered locus">RPE_0372</name>
</gene>
<organism>
    <name type="scientific">Rhodopseudomonas palustris (strain BisA53)</name>
    <dbReference type="NCBI Taxonomy" id="316055"/>
    <lineage>
        <taxon>Bacteria</taxon>
        <taxon>Pseudomonadati</taxon>
        <taxon>Pseudomonadota</taxon>
        <taxon>Alphaproteobacteria</taxon>
        <taxon>Hyphomicrobiales</taxon>
        <taxon>Nitrobacteraceae</taxon>
        <taxon>Rhodopseudomonas</taxon>
    </lineage>
</organism>
<protein>
    <recommendedName>
        <fullName evidence="1">ATP-dependent protease ATPase subunit HslU</fullName>
    </recommendedName>
    <alternativeName>
        <fullName evidence="1">Unfoldase HslU</fullName>
    </alternativeName>
</protein>
<keyword id="KW-0067">ATP-binding</keyword>
<keyword id="KW-0143">Chaperone</keyword>
<keyword id="KW-0963">Cytoplasm</keyword>
<keyword id="KW-0547">Nucleotide-binding</keyword>
<keyword id="KW-0346">Stress response</keyword>
<name>HSLU_RHOP5</name>
<evidence type="ECO:0000255" key="1">
    <source>
        <dbReference type="HAMAP-Rule" id="MF_00249"/>
    </source>
</evidence>
<dbReference type="EMBL" id="CP000463">
    <property type="protein sequence ID" value="ABJ04331.1"/>
    <property type="molecule type" value="Genomic_DNA"/>
</dbReference>
<dbReference type="SMR" id="Q07UQ3"/>
<dbReference type="STRING" id="316055.RPE_0372"/>
<dbReference type="KEGG" id="rpe:RPE_0372"/>
<dbReference type="eggNOG" id="COG1220">
    <property type="taxonomic scope" value="Bacteria"/>
</dbReference>
<dbReference type="HOGENOM" id="CLU_033123_0_0_5"/>
<dbReference type="OrthoDB" id="9804062at2"/>
<dbReference type="GO" id="GO:0009376">
    <property type="term" value="C:HslUV protease complex"/>
    <property type="evidence" value="ECO:0007669"/>
    <property type="project" value="UniProtKB-UniRule"/>
</dbReference>
<dbReference type="GO" id="GO:0005524">
    <property type="term" value="F:ATP binding"/>
    <property type="evidence" value="ECO:0007669"/>
    <property type="project" value="UniProtKB-UniRule"/>
</dbReference>
<dbReference type="GO" id="GO:0016887">
    <property type="term" value="F:ATP hydrolysis activity"/>
    <property type="evidence" value="ECO:0007669"/>
    <property type="project" value="InterPro"/>
</dbReference>
<dbReference type="GO" id="GO:0008233">
    <property type="term" value="F:peptidase activity"/>
    <property type="evidence" value="ECO:0007669"/>
    <property type="project" value="InterPro"/>
</dbReference>
<dbReference type="GO" id="GO:0036402">
    <property type="term" value="F:proteasome-activating activity"/>
    <property type="evidence" value="ECO:0007669"/>
    <property type="project" value="UniProtKB-UniRule"/>
</dbReference>
<dbReference type="GO" id="GO:0043335">
    <property type="term" value="P:protein unfolding"/>
    <property type="evidence" value="ECO:0007669"/>
    <property type="project" value="UniProtKB-UniRule"/>
</dbReference>
<dbReference type="GO" id="GO:0051603">
    <property type="term" value="P:proteolysis involved in protein catabolic process"/>
    <property type="evidence" value="ECO:0007669"/>
    <property type="project" value="TreeGrafter"/>
</dbReference>
<dbReference type="CDD" id="cd19498">
    <property type="entry name" value="RecA-like_HslU"/>
    <property type="match status" value="1"/>
</dbReference>
<dbReference type="FunFam" id="3.40.50.300:FF:000213">
    <property type="entry name" value="ATP-dependent protease ATPase subunit HslU"/>
    <property type="match status" value="1"/>
</dbReference>
<dbReference type="FunFam" id="3.40.50.300:FF:000220">
    <property type="entry name" value="ATP-dependent protease ATPase subunit HslU"/>
    <property type="match status" value="1"/>
</dbReference>
<dbReference type="Gene3D" id="1.10.8.60">
    <property type="match status" value="1"/>
</dbReference>
<dbReference type="Gene3D" id="1.10.8.10">
    <property type="entry name" value="DNA helicase RuvA subunit, C-terminal domain"/>
    <property type="match status" value="1"/>
</dbReference>
<dbReference type="Gene3D" id="3.40.50.300">
    <property type="entry name" value="P-loop containing nucleotide triphosphate hydrolases"/>
    <property type="match status" value="2"/>
</dbReference>
<dbReference type="HAMAP" id="MF_00249">
    <property type="entry name" value="HslU"/>
    <property type="match status" value="1"/>
</dbReference>
<dbReference type="InterPro" id="IPR003593">
    <property type="entry name" value="AAA+_ATPase"/>
</dbReference>
<dbReference type="InterPro" id="IPR050052">
    <property type="entry name" value="ATP-dep_Clp_protease_ClpX"/>
</dbReference>
<dbReference type="InterPro" id="IPR003959">
    <property type="entry name" value="ATPase_AAA_core"/>
</dbReference>
<dbReference type="InterPro" id="IPR019489">
    <property type="entry name" value="Clp_ATPase_C"/>
</dbReference>
<dbReference type="InterPro" id="IPR004491">
    <property type="entry name" value="HslU"/>
</dbReference>
<dbReference type="InterPro" id="IPR027417">
    <property type="entry name" value="P-loop_NTPase"/>
</dbReference>
<dbReference type="NCBIfam" id="TIGR00390">
    <property type="entry name" value="hslU"/>
    <property type="match status" value="1"/>
</dbReference>
<dbReference type="NCBIfam" id="NF003544">
    <property type="entry name" value="PRK05201.1"/>
    <property type="match status" value="1"/>
</dbReference>
<dbReference type="PANTHER" id="PTHR48102">
    <property type="entry name" value="ATP-DEPENDENT CLP PROTEASE ATP-BINDING SUBUNIT CLPX-LIKE, MITOCHONDRIAL-RELATED"/>
    <property type="match status" value="1"/>
</dbReference>
<dbReference type="PANTHER" id="PTHR48102:SF3">
    <property type="entry name" value="ATP-DEPENDENT PROTEASE ATPASE SUBUNIT HSLU"/>
    <property type="match status" value="1"/>
</dbReference>
<dbReference type="Pfam" id="PF00004">
    <property type="entry name" value="AAA"/>
    <property type="match status" value="1"/>
</dbReference>
<dbReference type="Pfam" id="PF07724">
    <property type="entry name" value="AAA_2"/>
    <property type="match status" value="1"/>
</dbReference>
<dbReference type="SMART" id="SM00382">
    <property type="entry name" value="AAA"/>
    <property type="match status" value="1"/>
</dbReference>
<dbReference type="SMART" id="SM01086">
    <property type="entry name" value="ClpB_D2-small"/>
    <property type="match status" value="1"/>
</dbReference>
<dbReference type="SUPFAM" id="SSF52540">
    <property type="entry name" value="P-loop containing nucleoside triphosphate hydrolases"/>
    <property type="match status" value="1"/>
</dbReference>